<comment type="function">
    <text evidence="1">Possibly the antitoxin component of a type II toxin-antitoxin (TA) system. Its cognate toxin is VapC51.</text>
</comment>
<evidence type="ECO:0000305" key="1"/>
<organism>
    <name type="scientific">Mycobacterium tuberculosis (strain ATCC 25618 / H37Rv)</name>
    <dbReference type="NCBI Taxonomy" id="83332"/>
    <lineage>
        <taxon>Bacteria</taxon>
        <taxon>Bacillati</taxon>
        <taxon>Actinomycetota</taxon>
        <taxon>Actinomycetes</taxon>
        <taxon>Mycobacteriales</taxon>
        <taxon>Mycobacteriaceae</taxon>
        <taxon>Mycobacterium</taxon>
        <taxon>Mycobacterium tuberculosis complex</taxon>
    </lineage>
</organism>
<proteinExistence type="evidence at protein level"/>
<name>VPB51_MYCTU</name>
<protein>
    <recommendedName>
        <fullName evidence="1">Putative antitoxin VapB51</fullName>
    </recommendedName>
</protein>
<sequence length="64" mass="6973">MAKHLVDIDEQALNMARTELGTTTIKDTVNAALRQATSQRVQRVAAALDTLAAAPPEDRAEAWR</sequence>
<reference key="1">
    <citation type="journal article" date="1998" name="Nature">
        <title>Deciphering the biology of Mycobacterium tuberculosis from the complete genome sequence.</title>
        <authorList>
            <person name="Cole S.T."/>
            <person name="Brosch R."/>
            <person name="Parkhill J."/>
            <person name="Garnier T."/>
            <person name="Churcher C.M."/>
            <person name="Harris D.E."/>
            <person name="Gordon S.V."/>
            <person name="Eiglmeier K."/>
            <person name="Gas S."/>
            <person name="Barry C.E. III"/>
            <person name="Tekaia F."/>
            <person name="Badcock K."/>
            <person name="Basham D."/>
            <person name="Brown D."/>
            <person name="Chillingworth T."/>
            <person name="Connor R."/>
            <person name="Davies R.M."/>
            <person name="Devlin K."/>
            <person name="Feltwell T."/>
            <person name="Gentles S."/>
            <person name="Hamlin N."/>
            <person name="Holroyd S."/>
            <person name="Hornsby T."/>
            <person name="Jagels K."/>
            <person name="Krogh A."/>
            <person name="McLean J."/>
            <person name="Moule S."/>
            <person name="Murphy L.D."/>
            <person name="Oliver S."/>
            <person name="Osborne J."/>
            <person name="Quail M.A."/>
            <person name="Rajandream M.A."/>
            <person name="Rogers J."/>
            <person name="Rutter S."/>
            <person name="Seeger K."/>
            <person name="Skelton S."/>
            <person name="Squares S."/>
            <person name="Squares R."/>
            <person name="Sulston J.E."/>
            <person name="Taylor K."/>
            <person name="Whitehead S."/>
            <person name="Barrell B.G."/>
        </authorList>
    </citation>
    <scope>NUCLEOTIDE SEQUENCE [LARGE SCALE GENOMIC DNA]</scope>
    <source>
        <strain>ATCC 25618 / H37Rv</strain>
    </source>
</reference>
<reference key="2">
    <citation type="submission" date="2013-11" db="EMBL/GenBank/DDBJ databases">
        <title>The genome sequence of Mycobacterium tuberculosis H37Rv.</title>
        <authorList>
            <consortium name="The Broad Institute Genome Sequencing Platform"/>
            <person name="Galagan J."/>
            <person name="Kreiswirth B."/>
            <person name="Dobos K."/>
            <person name="Fortune S."/>
            <person name="Fitzgerald M."/>
            <person name="Young S.K."/>
            <person name="Zeng Q."/>
            <person name="Gargeya S."/>
            <person name="Abouelleil A."/>
            <person name="Alvarado L."/>
            <person name="Berlin A.M."/>
            <person name="Chapman S.B."/>
            <person name="Gainer-Dewar J."/>
            <person name="Goldberg J."/>
            <person name="Gnerre S."/>
            <person name="Griggs A."/>
            <person name="Gujja S."/>
            <person name="Hansen M."/>
            <person name="Howarth C."/>
            <person name="Imamovic A."/>
            <person name="Larimer J."/>
            <person name="McCowan C."/>
            <person name="Murphy C."/>
            <person name="Pearson M."/>
            <person name="Poon T."/>
            <person name="Priest M."/>
            <person name="Roberts A."/>
            <person name="Saif S."/>
            <person name="Shea T."/>
            <person name="Sykes S."/>
            <person name="Wortman J."/>
            <person name="Nusbaum C."/>
            <person name="Birren B."/>
        </authorList>
    </citation>
    <scope>NUCLEOTIDE SEQUENCE [LARGE SCALE GENOMIC DNA]</scope>
    <source>
        <strain>ATCC 25618 / H37Rv</strain>
    </source>
</reference>
<reference key="3">
    <citation type="submission" date="2014-04" db="EMBL/GenBank/DDBJ databases">
        <title>The genome sequence of Mycobacterium tuberculosis H37Rv.</title>
        <authorList>
            <consortium name="The Broad Institute Genomics Platform"/>
            <consortium name="The Broad Institute Genome Sequencing Center for Infectious Disease"/>
            <person name="Earl A.M."/>
            <person name="Kreiswirth B."/>
            <person name="Gomez J."/>
            <person name="Victor T."/>
            <person name="Desjardins C."/>
            <person name="Abeel T."/>
            <person name="Young S."/>
            <person name="Zeng Q."/>
            <person name="Gargeya S."/>
            <person name="Abouelleil A."/>
            <person name="Alvarado L."/>
            <person name="Chapman S.B."/>
            <person name="Gainer-Dewar J."/>
            <person name="Goldberg J."/>
            <person name="Griggs A."/>
            <person name="Gujja S."/>
            <person name="Hansen M."/>
            <person name="Howarth C."/>
            <person name="Imamovic A."/>
            <person name="Larimer J."/>
            <person name="Murphy C."/>
            <person name="Naylor J."/>
            <person name="Pearson M."/>
            <person name="Poon T.W."/>
            <person name="Priest M."/>
            <person name="Roberts A."/>
            <person name="Saif S."/>
            <person name="Shea T."/>
            <person name="Sykes S."/>
            <person name="Wortman J."/>
            <person name="Nusbaum C."/>
            <person name="Birren B."/>
        </authorList>
    </citation>
    <scope>NUCLEOTIDE SEQUENCE [LARGE SCALE GENOMIC DNA]</scope>
    <source>
        <strain>ATCC 25618 / H37Rv</strain>
    </source>
</reference>
<reference key="4">
    <citation type="journal article" date="2011" name="Mol. Cell. Proteomics">
        <title>Proteogenomic analysis of Mycobacterium tuberculosis by high resolution mass spectrometry.</title>
        <authorList>
            <person name="Kelkar D.S."/>
            <person name="Kumar D."/>
            <person name="Kumar P."/>
            <person name="Balakrishnan L."/>
            <person name="Muthusamy B."/>
            <person name="Yadav A.K."/>
            <person name="Shrivastava P."/>
            <person name="Marimuthu A."/>
            <person name="Anand S."/>
            <person name="Sundaram H."/>
            <person name="Kingsbury R."/>
            <person name="Harsha H.C."/>
            <person name="Nair B."/>
            <person name="Prasad T.S."/>
            <person name="Chauhan D.S."/>
            <person name="Katoch K."/>
            <person name="Katoch V.M."/>
            <person name="Kumar P."/>
            <person name="Chaerkady R."/>
            <person name="Ramachandran S."/>
            <person name="Dash D."/>
            <person name="Pandey A."/>
        </authorList>
    </citation>
    <scope>IDENTIFICATION BY MASS SPECTROMETRY [LARGE SCALE ANALYSIS]</scope>
    <source>
        <strain>ATCC 25618 / H37Rv</strain>
    </source>
</reference>
<keyword id="KW-1185">Reference proteome</keyword>
<keyword id="KW-1277">Toxin-antitoxin system</keyword>
<gene>
    <name evidence="1" type="primary">vapB51</name>
    <name type="ordered locus">Rv0229A</name>
    <name type="ordered locus">RVBD_0229Ac</name>
    <name type="ORF">P425_00239</name>
</gene>
<dbReference type="EMBL" id="AL123456">
    <property type="status" value="NOT_ANNOTATED_CDS"/>
    <property type="molecule type" value="Genomic_DNA"/>
</dbReference>
<dbReference type="EMBL" id="CP003248">
    <property type="protein sequence ID" value="AFN48081.1"/>
    <property type="molecule type" value="Genomic_DNA"/>
</dbReference>
<dbReference type="EMBL" id="JLDD01000001">
    <property type="protein sequence ID" value="KBJ41339.1"/>
    <property type="molecule type" value="Genomic_DNA"/>
</dbReference>
<dbReference type="RefSeq" id="WP_003911072.1">
    <property type="nucleotide sequence ID" value="NZ_NVQJ01000001.1"/>
</dbReference>
<dbReference type="SMR" id="I6WXS6"/>
<dbReference type="KEGG" id="mtv:RVBD_0229Ac"/>
<dbReference type="InParanoid" id="I6WXS6"/>
<dbReference type="Proteomes" id="UP000001584">
    <property type="component" value="Chromosome"/>
</dbReference>
<feature type="chain" id="PRO_0000430095" description="Putative antitoxin VapB51">
    <location>
        <begin position="1"/>
        <end position="64"/>
    </location>
</feature>
<accession>I6WXS6</accession>